<organism>
    <name type="scientific">Salmonella enteritidis PT4 (strain P125109)</name>
    <dbReference type="NCBI Taxonomy" id="550537"/>
    <lineage>
        <taxon>Bacteria</taxon>
        <taxon>Pseudomonadati</taxon>
        <taxon>Pseudomonadota</taxon>
        <taxon>Gammaproteobacteria</taxon>
        <taxon>Enterobacterales</taxon>
        <taxon>Enterobacteriaceae</taxon>
        <taxon>Salmonella</taxon>
    </lineage>
</organism>
<gene>
    <name evidence="1" type="primary">ycgL</name>
    <name type="ordered locus">SEN1224</name>
</gene>
<protein>
    <recommendedName>
        <fullName evidence="1">Protein YcgL</fullName>
    </recommendedName>
</protein>
<reference key="1">
    <citation type="journal article" date="2008" name="Genome Res.">
        <title>Comparative genome analysis of Salmonella enteritidis PT4 and Salmonella gallinarum 287/91 provides insights into evolutionary and host adaptation pathways.</title>
        <authorList>
            <person name="Thomson N.R."/>
            <person name="Clayton D.J."/>
            <person name="Windhorst D."/>
            <person name="Vernikos G."/>
            <person name="Davidson S."/>
            <person name="Churcher C."/>
            <person name="Quail M.A."/>
            <person name="Stevens M."/>
            <person name="Jones M.A."/>
            <person name="Watson M."/>
            <person name="Barron A."/>
            <person name="Layton A."/>
            <person name="Pickard D."/>
            <person name="Kingsley R.A."/>
            <person name="Bignell A."/>
            <person name="Clark L."/>
            <person name="Harris B."/>
            <person name="Ormond D."/>
            <person name="Abdellah Z."/>
            <person name="Brooks K."/>
            <person name="Cherevach I."/>
            <person name="Chillingworth T."/>
            <person name="Woodward J."/>
            <person name="Norberczak H."/>
            <person name="Lord A."/>
            <person name="Arrowsmith C."/>
            <person name="Jagels K."/>
            <person name="Moule S."/>
            <person name="Mungall K."/>
            <person name="Saunders M."/>
            <person name="Whitehead S."/>
            <person name="Chabalgoity J.A."/>
            <person name="Maskell D."/>
            <person name="Humphreys T."/>
            <person name="Roberts M."/>
            <person name="Barrow P.A."/>
            <person name="Dougan G."/>
            <person name="Parkhill J."/>
        </authorList>
    </citation>
    <scope>NUCLEOTIDE SEQUENCE [LARGE SCALE GENOMIC DNA]</scope>
    <source>
        <strain>P125109</strain>
    </source>
</reference>
<name>YCGL_SALEP</name>
<proteinExistence type="inferred from homology"/>
<feature type="chain" id="PRO_0000375352" description="Protein YcgL">
    <location>
        <begin position="1"/>
        <end position="110"/>
    </location>
</feature>
<feature type="domain" description="YcgL" evidence="1">
    <location>
        <begin position="14"/>
        <end position="98"/>
    </location>
</feature>
<feature type="region of interest" description="Disordered" evidence="2">
    <location>
        <begin position="87"/>
        <end position="110"/>
    </location>
</feature>
<feature type="compositionally biased region" description="Polar residues" evidence="2">
    <location>
        <begin position="97"/>
        <end position="110"/>
    </location>
</feature>
<sequence>MRQVTIPLIQSKSMFCVIYRSSKRDQTYLYVEKKDDFSRVPEALMKGFGQPQLAMMLPLDGRKKLVNAELEKVKQALSEQGYYLQLPPPPEDLLKQHLSSVGQNTSPADR</sequence>
<evidence type="ECO:0000255" key="1">
    <source>
        <dbReference type="HAMAP-Rule" id="MF_01866"/>
    </source>
</evidence>
<evidence type="ECO:0000256" key="2">
    <source>
        <dbReference type="SAM" id="MobiDB-lite"/>
    </source>
</evidence>
<accession>B5R2V7</accession>
<dbReference type="EMBL" id="AM933172">
    <property type="protein sequence ID" value="CAR32804.1"/>
    <property type="molecule type" value="Genomic_DNA"/>
</dbReference>
<dbReference type="SMR" id="B5R2V7"/>
<dbReference type="KEGG" id="set:SEN1224"/>
<dbReference type="HOGENOM" id="CLU_155118_1_0_6"/>
<dbReference type="Proteomes" id="UP000000613">
    <property type="component" value="Chromosome"/>
</dbReference>
<dbReference type="Gene3D" id="3.10.510.20">
    <property type="entry name" value="YcgL domain"/>
    <property type="match status" value="1"/>
</dbReference>
<dbReference type="HAMAP" id="MF_01866">
    <property type="entry name" value="UPF0745"/>
    <property type="match status" value="1"/>
</dbReference>
<dbReference type="InterPro" id="IPR038068">
    <property type="entry name" value="YcgL-like_sf"/>
</dbReference>
<dbReference type="InterPro" id="IPR027354">
    <property type="entry name" value="YcgL_dom"/>
</dbReference>
<dbReference type="PANTHER" id="PTHR38109">
    <property type="entry name" value="PROTEIN YCGL"/>
    <property type="match status" value="1"/>
</dbReference>
<dbReference type="PANTHER" id="PTHR38109:SF1">
    <property type="entry name" value="PROTEIN YCGL"/>
    <property type="match status" value="1"/>
</dbReference>
<dbReference type="Pfam" id="PF05166">
    <property type="entry name" value="YcgL"/>
    <property type="match status" value="1"/>
</dbReference>
<dbReference type="SUPFAM" id="SSF160191">
    <property type="entry name" value="YcgL-like"/>
    <property type="match status" value="1"/>
</dbReference>
<dbReference type="PROSITE" id="PS51648">
    <property type="entry name" value="YCGL"/>
    <property type="match status" value="1"/>
</dbReference>